<proteinExistence type="inferred from homology"/>
<accession>A4W440</accession>
<comment type="function">
    <text evidence="1">Plays an important role in the de novo pathway of purine nucleotide biosynthesis. Catalyzes the first committed step in the biosynthesis of AMP from IMP.</text>
</comment>
<comment type="catalytic activity">
    <reaction evidence="1">
        <text>IMP + L-aspartate + GTP = N(6)-(1,2-dicarboxyethyl)-AMP + GDP + phosphate + 2 H(+)</text>
        <dbReference type="Rhea" id="RHEA:15753"/>
        <dbReference type="ChEBI" id="CHEBI:15378"/>
        <dbReference type="ChEBI" id="CHEBI:29991"/>
        <dbReference type="ChEBI" id="CHEBI:37565"/>
        <dbReference type="ChEBI" id="CHEBI:43474"/>
        <dbReference type="ChEBI" id="CHEBI:57567"/>
        <dbReference type="ChEBI" id="CHEBI:58053"/>
        <dbReference type="ChEBI" id="CHEBI:58189"/>
        <dbReference type="EC" id="6.3.4.4"/>
    </reaction>
</comment>
<comment type="cofactor">
    <cofactor evidence="1">
        <name>Mg(2+)</name>
        <dbReference type="ChEBI" id="CHEBI:18420"/>
    </cofactor>
    <text evidence="1">Binds 1 Mg(2+) ion per subunit.</text>
</comment>
<comment type="pathway">
    <text evidence="1">Purine metabolism; AMP biosynthesis via de novo pathway; AMP from IMP: step 1/2.</text>
</comment>
<comment type="subunit">
    <text evidence="1">Homodimer.</text>
</comment>
<comment type="subcellular location">
    <subcellularLocation>
        <location evidence="1">Cytoplasm</location>
    </subcellularLocation>
</comment>
<comment type="similarity">
    <text evidence="1">Belongs to the adenylosuccinate synthetase family.</text>
</comment>
<comment type="sequence caution" evidence="2">
    <conflict type="erroneous initiation">
        <sequence resource="EMBL-CDS" id="ABP93129"/>
    </conflict>
</comment>
<feature type="chain" id="PRO_0000321809" description="Adenylosuccinate synthetase">
    <location>
        <begin position="1"/>
        <end position="430"/>
    </location>
</feature>
<feature type="active site" description="Proton acceptor" evidence="1">
    <location>
        <position position="13"/>
    </location>
</feature>
<feature type="active site" description="Proton donor" evidence="1">
    <location>
        <position position="41"/>
    </location>
</feature>
<feature type="binding site" evidence="1">
    <location>
        <begin position="12"/>
        <end position="18"/>
    </location>
    <ligand>
        <name>GTP</name>
        <dbReference type="ChEBI" id="CHEBI:37565"/>
    </ligand>
</feature>
<feature type="binding site" description="in other chain" evidence="1">
    <location>
        <begin position="13"/>
        <end position="16"/>
    </location>
    <ligand>
        <name>IMP</name>
        <dbReference type="ChEBI" id="CHEBI:58053"/>
        <note>ligand shared between dimeric partners</note>
    </ligand>
</feature>
<feature type="binding site" evidence="1">
    <location>
        <position position="13"/>
    </location>
    <ligand>
        <name>Mg(2+)</name>
        <dbReference type="ChEBI" id="CHEBI:18420"/>
    </ligand>
</feature>
<feature type="binding site" description="in other chain" evidence="1">
    <location>
        <begin position="38"/>
        <end position="41"/>
    </location>
    <ligand>
        <name>IMP</name>
        <dbReference type="ChEBI" id="CHEBI:58053"/>
        <note>ligand shared between dimeric partners</note>
    </ligand>
</feature>
<feature type="binding site" evidence="1">
    <location>
        <begin position="40"/>
        <end position="42"/>
    </location>
    <ligand>
        <name>GTP</name>
        <dbReference type="ChEBI" id="CHEBI:37565"/>
    </ligand>
</feature>
<feature type="binding site" evidence="1">
    <location>
        <position position="40"/>
    </location>
    <ligand>
        <name>Mg(2+)</name>
        <dbReference type="ChEBI" id="CHEBI:18420"/>
    </ligand>
</feature>
<feature type="binding site" description="in other chain" evidence="1">
    <location>
        <position position="128"/>
    </location>
    <ligand>
        <name>IMP</name>
        <dbReference type="ChEBI" id="CHEBI:58053"/>
        <note>ligand shared between dimeric partners</note>
    </ligand>
</feature>
<feature type="binding site" evidence="1">
    <location>
        <position position="142"/>
    </location>
    <ligand>
        <name>IMP</name>
        <dbReference type="ChEBI" id="CHEBI:58053"/>
        <note>ligand shared between dimeric partners</note>
    </ligand>
</feature>
<feature type="binding site" description="in other chain" evidence="1">
    <location>
        <position position="223"/>
    </location>
    <ligand>
        <name>IMP</name>
        <dbReference type="ChEBI" id="CHEBI:58053"/>
        <note>ligand shared between dimeric partners</note>
    </ligand>
</feature>
<feature type="binding site" description="in other chain" evidence="1">
    <location>
        <position position="238"/>
    </location>
    <ligand>
        <name>IMP</name>
        <dbReference type="ChEBI" id="CHEBI:58053"/>
        <note>ligand shared between dimeric partners</note>
    </ligand>
</feature>
<feature type="binding site" evidence="1">
    <location>
        <begin position="298"/>
        <end position="304"/>
    </location>
    <ligand>
        <name>substrate</name>
    </ligand>
</feature>
<feature type="binding site" description="in other chain" evidence="1">
    <location>
        <position position="302"/>
    </location>
    <ligand>
        <name>IMP</name>
        <dbReference type="ChEBI" id="CHEBI:58053"/>
        <note>ligand shared between dimeric partners</note>
    </ligand>
</feature>
<feature type="binding site" evidence="1">
    <location>
        <position position="304"/>
    </location>
    <ligand>
        <name>GTP</name>
        <dbReference type="ChEBI" id="CHEBI:37565"/>
    </ligand>
</feature>
<feature type="binding site" evidence="1">
    <location>
        <begin position="330"/>
        <end position="332"/>
    </location>
    <ligand>
        <name>GTP</name>
        <dbReference type="ChEBI" id="CHEBI:37565"/>
    </ligand>
</feature>
<feature type="binding site" evidence="1">
    <location>
        <begin position="412"/>
        <end position="414"/>
    </location>
    <ligand>
        <name>GTP</name>
        <dbReference type="ChEBI" id="CHEBI:37565"/>
    </ligand>
</feature>
<sequence length="430" mass="47508">MTSVVVVGTQWGDEGKGKITDFLSANAEVIARYQGGDNAGHTIVIDGTKYKLHLIPSGIFFPEKISVIGNGVVVNPKSLVKEINYLHDSGVTTDNLRISDRAHVILPYHIKLDQLQEESKGENKIGTTNKGIGPAYMDKAARVGIRIADLLDKEIFAERLRTNLAEKNRLFEKMYESTPIEFDEIFEEYYAYGQEIKKYVTDTSVILNDALDQGKRVLFEGAQGVMLDIDQGTYPFVTSSNPVAGGVTIGSGVGPSKIDKVVGVCKAYTSRVGDGPFPTELHDEIGDRIREIGKEYGTTTGRPRRVGWFDSVVMRHSRRVSGITNLSLNSIDVLSGLGTLKICVAYDLDGERIDHYPASLEQLKRCKPIYEEMPGWSEDITGVRSLDELPEAARNYVRRISELVGVRISTFSVGPGREQTNILESVWSAK</sequence>
<gene>
    <name evidence="1" type="primary">purA</name>
    <name type="ordered locus">SSU98_1971</name>
</gene>
<evidence type="ECO:0000255" key="1">
    <source>
        <dbReference type="HAMAP-Rule" id="MF_00011"/>
    </source>
</evidence>
<evidence type="ECO:0000305" key="2"/>
<reference key="1">
    <citation type="journal article" date="2007" name="PLoS ONE">
        <title>A glimpse of streptococcal toxic shock syndrome from comparative genomics of S. suis 2 Chinese isolates.</title>
        <authorList>
            <person name="Chen C."/>
            <person name="Tang J."/>
            <person name="Dong W."/>
            <person name="Wang C."/>
            <person name="Feng Y."/>
            <person name="Wang J."/>
            <person name="Zheng F."/>
            <person name="Pan X."/>
            <person name="Liu D."/>
            <person name="Li M."/>
            <person name="Song Y."/>
            <person name="Zhu X."/>
            <person name="Sun H."/>
            <person name="Feng T."/>
            <person name="Guo Z."/>
            <person name="Ju A."/>
            <person name="Ge J."/>
            <person name="Dong Y."/>
            <person name="Sun W."/>
            <person name="Jiang Y."/>
            <person name="Wang J."/>
            <person name="Yan J."/>
            <person name="Yang H."/>
            <person name="Wang X."/>
            <person name="Gao G.F."/>
            <person name="Yang R."/>
            <person name="Wang J."/>
            <person name="Yu J."/>
        </authorList>
    </citation>
    <scope>NUCLEOTIDE SEQUENCE [LARGE SCALE GENOMIC DNA]</scope>
    <source>
        <strain>98HAH33</strain>
    </source>
</reference>
<organism>
    <name type="scientific">Streptococcus suis (strain 98HAH33)</name>
    <dbReference type="NCBI Taxonomy" id="391296"/>
    <lineage>
        <taxon>Bacteria</taxon>
        <taxon>Bacillati</taxon>
        <taxon>Bacillota</taxon>
        <taxon>Bacilli</taxon>
        <taxon>Lactobacillales</taxon>
        <taxon>Streptococcaceae</taxon>
        <taxon>Streptococcus</taxon>
    </lineage>
</organism>
<keyword id="KW-0963">Cytoplasm</keyword>
<keyword id="KW-0342">GTP-binding</keyword>
<keyword id="KW-0436">Ligase</keyword>
<keyword id="KW-0460">Magnesium</keyword>
<keyword id="KW-0479">Metal-binding</keyword>
<keyword id="KW-0547">Nucleotide-binding</keyword>
<keyword id="KW-0658">Purine biosynthesis</keyword>
<dbReference type="EC" id="6.3.4.4" evidence="1"/>
<dbReference type="EMBL" id="CP000408">
    <property type="protein sequence ID" value="ABP93129.1"/>
    <property type="status" value="ALT_INIT"/>
    <property type="molecule type" value="Genomic_DNA"/>
</dbReference>
<dbReference type="SMR" id="A4W440"/>
<dbReference type="KEGG" id="ssv:SSU98_1971"/>
<dbReference type="HOGENOM" id="CLU_029848_0_0_9"/>
<dbReference type="UniPathway" id="UPA00075">
    <property type="reaction ID" value="UER00335"/>
</dbReference>
<dbReference type="GO" id="GO:0005737">
    <property type="term" value="C:cytoplasm"/>
    <property type="evidence" value="ECO:0007669"/>
    <property type="project" value="UniProtKB-SubCell"/>
</dbReference>
<dbReference type="GO" id="GO:0004019">
    <property type="term" value="F:adenylosuccinate synthase activity"/>
    <property type="evidence" value="ECO:0007669"/>
    <property type="project" value="UniProtKB-UniRule"/>
</dbReference>
<dbReference type="GO" id="GO:0005525">
    <property type="term" value="F:GTP binding"/>
    <property type="evidence" value="ECO:0007669"/>
    <property type="project" value="UniProtKB-UniRule"/>
</dbReference>
<dbReference type="GO" id="GO:0000287">
    <property type="term" value="F:magnesium ion binding"/>
    <property type="evidence" value="ECO:0007669"/>
    <property type="project" value="UniProtKB-UniRule"/>
</dbReference>
<dbReference type="GO" id="GO:0044208">
    <property type="term" value="P:'de novo' AMP biosynthetic process"/>
    <property type="evidence" value="ECO:0007669"/>
    <property type="project" value="UniProtKB-UniRule"/>
</dbReference>
<dbReference type="GO" id="GO:0046040">
    <property type="term" value="P:IMP metabolic process"/>
    <property type="evidence" value="ECO:0007669"/>
    <property type="project" value="TreeGrafter"/>
</dbReference>
<dbReference type="CDD" id="cd03108">
    <property type="entry name" value="AdSS"/>
    <property type="match status" value="1"/>
</dbReference>
<dbReference type="FunFam" id="1.10.300.10:FF:000001">
    <property type="entry name" value="Adenylosuccinate synthetase"/>
    <property type="match status" value="1"/>
</dbReference>
<dbReference type="FunFam" id="3.90.170.10:FF:000001">
    <property type="entry name" value="Adenylosuccinate synthetase"/>
    <property type="match status" value="1"/>
</dbReference>
<dbReference type="Gene3D" id="3.40.440.10">
    <property type="entry name" value="Adenylosuccinate Synthetase, subunit A, domain 1"/>
    <property type="match status" value="1"/>
</dbReference>
<dbReference type="Gene3D" id="1.10.300.10">
    <property type="entry name" value="Adenylosuccinate Synthetase, subunit A, domain 2"/>
    <property type="match status" value="1"/>
</dbReference>
<dbReference type="Gene3D" id="3.90.170.10">
    <property type="entry name" value="Adenylosuccinate Synthetase, subunit A, domain 3"/>
    <property type="match status" value="1"/>
</dbReference>
<dbReference type="HAMAP" id="MF_00011">
    <property type="entry name" value="Adenylosucc_synth"/>
    <property type="match status" value="1"/>
</dbReference>
<dbReference type="InterPro" id="IPR018220">
    <property type="entry name" value="Adenylosuccin_syn_GTP-bd"/>
</dbReference>
<dbReference type="InterPro" id="IPR033128">
    <property type="entry name" value="Adenylosuccin_syn_Lys_AS"/>
</dbReference>
<dbReference type="InterPro" id="IPR042109">
    <property type="entry name" value="Adenylosuccinate_synth_dom1"/>
</dbReference>
<dbReference type="InterPro" id="IPR042110">
    <property type="entry name" value="Adenylosuccinate_synth_dom2"/>
</dbReference>
<dbReference type="InterPro" id="IPR042111">
    <property type="entry name" value="Adenylosuccinate_synth_dom3"/>
</dbReference>
<dbReference type="InterPro" id="IPR001114">
    <property type="entry name" value="Adenylosuccinate_synthetase"/>
</dbReference>
<dbReference type="InterPro" id="IPR027417">
    <property type="entry name" value="P-loop_NTPase"/>
</dbReference>
<dbReference type="NCBIfam" id="NF002223">
    <property type="entry name" value="PRK01117.1"/>
    <property type="match status" value="1"/>
</dbReference>
<dbReference type="NCBIfam" id="TIGR00184">
    <property type="entry name" value="purA"/>
    <property type="match status" value="1"/>
</dbReference>
<dbReference type="PANTHER" id="PTHR11846">
    <property type="entry name" value="ADENYLOSUCCINATE SYNTHETASE"/>
    <property type="match status" value="1"/>
</dbReference>
<dbReference type="PANTHER" id="PTHR11846:SF0">
    <property type="entry name" value="ADENYLOSUCCINATE SYNTHETASE"/>
    <property type="match status" value="1"/>
</dbReference>
<dbReference type="Pfam" id="PF00709">
    <property type="entry name" value="Adenylsucc_synt"/>
    <property type="match status" value="1"/>
</dbReference>
<dbReference type="SMART" id="SM00788">
    <property type="entry name" value="Adenylsucc_synt"/>
    <property type="match status" value="1"/>
</dbReference>
<dbReference type="SUPFAM" id="SSF52540">
    <property type="entry name" value="P-loop containing nucleoside triphosphate hydrolases"/>
    <property type="match status" value="1"/>
</dbReference>
<dbReference type="PROSITE" id="PS01266">
    <property type="entry name" value="ADENYLOSUCCIN_SYN_1"/>
    <property type="match status" value="1"/>
</dbReference>
<dbReference type="PROSITE" id="PS00513">
    <property type="entry name" value="ADENYLOSUCCIN_SYN_2"/>
    <property type="match status" value="1"/>
</dbReference>
<name>PURA_STRS2</name>
<protein>
    <recommendedName>
        <fullName evidence="1">Adenylosuccinate synthetase</fullName>
        <shortName evidence="1">AMPSase</shortName>
        <shortName evidence="1">AdSS</shortName>
        <ecNumber evidence="1">6.3.4.4</ecNumber>
    </recommendedName>
    <alternativeName>
        <fullName evidence="1">IMP--aspartate ligase</fullName>
    </alternativeName>
</protein>